<dbReference type="EMBL" id="AF092737">
    <property type="protein sequence ID" value="AAD28698.1"/>
    <property type="molecule type" value="mRNA"/>
</dbReference>
<dbReference type="EMBL" id="AF083241">
    <property type="protein sequence ID" value="AAD39839.1"/>
    <property type="molecule type" value="mRNA"/>
</dbReference>
<dbReference type="EMBL" id="AF083242">
    <property type="protein sequence ID" value="AAD39840.1"/>
    <property type="molecule type" value="mRNA"/>
</dbReference>
<dbReference type="EMBL" id="AK312072">
    <property type="protein sequence ID" value="BAG35008.1"/>
    <property type="molecule type" value="mRNA"/>
</dbReference>
<dbReference type="EMBL" id="AL009172">
    <property type="status" value="NOT_ANNOTATED_CDS"/>
    <property type="molecule type" value="Genomic_DNA"/>
</dbReference>
<dbReference type="EMBL" id="CH471164">
    <property type="protein sequence ID" value="EAW59325.1"/>
    <property type="molecule type" value="Genomic_DNA"/>
</dbReference>
<dbReference type="EMBL" id="CH471164">
    <property type="protein sequence ID" value="EAW59326.1"/>
    <property type="molecule type" value="Genomic_DNA"/>
</dbReference>
<dbReference type="EMBL" id="BC000720">
    <property type="protein sequence ID" value="AAH00720.1"/>
    <property type="molecule type" value="mRNA"/>
</dbReference>
<dbReference type="EMBL" id="BC008890">
    <property type="protein sequence ID" value="AAH08890.1"/>
    <property type="molecule type" value="mRNA"/>
</dbReference>
<dbReference type="CCDS" id="CCDS14284.1">
    <molecule id="Q9UBK9-2"/>
</dbReference>
<dbReference type="CCDS" id="CCDS14285.1">
    <molecule id="Q9UBK9-1"/>
</dbReference>
<dbReference type="RefSeq" id="NP_004173.1">
    <molecule id="Q9UBK9-1"/>
    <property type="nucleotide sequence ID" value="NM_004182.4"/>
</dbReference>
<dbReference type="RefSeq" id="NP_705582.1">
    <molecule id="Q9UBK9-2"/>
    <property type="nucleotide sequence ID" value="NM_153477.3"/>
</dbReference>
<dbReference type="SMR" id="Q9UBK9"/>
<dbReference type="BioGRID" id="113997">
    <property type="interactions" value="131"/>
</dbReference>
<dbReference type="ComplexPortal" id="CPX-6144">
    <property type="entry name" value="Prefoldin co-chaperone complex, URI1 variant"/>
</dbReference>
<dbReference type="CORUM" id="Q9UBK9"/>
<dbReference type="FunCoup" id="Q9UBK9">
    <property type="interactions" value="1217"/>
</dbReference>
<dbReference type="IntAct" id="Q9UBK9">
    <property type="interactions" value="110"/>
</dbReference>
<dbReference type="MINT" id="Q9UBK9"/>
<dbReference type="STRING" id="9606.ENSP00000337393"/>
<dbReference type="iPTMnet" id="Q9UBK9"/>
<dbReference type="PhosphoSitePlus" id="Q9UBK9"/>
<dbReference type="BioMuta" id="UXT"/>
<dbReference type="DMDM" id="8928445"/>
<dbReference type="jPOST" id="Q9UBK9"/>
<dbReference type="MassIVE" id="Q9UBK9"/>
<dbReference type="PaxDb" id="9606-ENSP00000337393"/>
<dbReference type="PeptideAtlas" id="Q9UBK9"/>
<dbReference type="ProteomicsDB" id="83987"/>
<dbReference type="Pumba" id="Q9UBK9"/>
<dbReference type="Antibodypedia" id="25507">
    <property type="antibodies" value="233 antibodies from 28 providers"/>
</dbReference>
<dbReference type="DNASU" id="8409"/>
<dbReference type="Ensembl" id="ENST00000333119.8">
    <molecule id="Q9UBK9-1"/>
    <property type="protein sequence ID" value="ENSP00000327797.3"/>
    <property type="gene ID" value="ENSG00000126756.12"/>
</dbReference>
<dbReference type="Ensembl" id="ENST00000335890.3">
    <molecule id="Q9UBK9-2"/>
    <property type="protein sequence ID" value="ENSP00000337393.2"/>
    <property type="gene ID" value="ENSG00000126756.12"/>
</dbReference>
<dbReference type="GeneID" id="8409"/>
<dbReference type="KEGG" id="hsa:8409"/>
<dbReference type="MANE-Select" id="ENST00000333119.8">
    <property type="protein sequence ID" value="ENSP00000327797.3"/>
    <property type="RefSeq nucleotide sequence ID" value="NM_004182.4"/>
    <property type="RefSeq protein sequence ID" value="NP_004173.1"/>
</dbReference>
<dbReference type="UCSC" id="uc004dim.4">
    <molecule id="Q9UBK9-1"/>
    <property type="organism name" value="human"/>
</dbReference>
<dbReference type="AGR" id="HGNC:12641"/>
<dbReference type="CTD" id="8409"/>
<dbReference type="DisGeNET" id="8409"/>
<dbReference type="GeneCards" id="UXT"/>
<dbReference type="HGNC" id="HGNC:12641">
    <property type="gene designation" value="UXT"/>
</dbReference>
<dbReference type="HPA" id="ENSG00000126756">
    <property type="expression patterns" value="Low tissue specificity"/>
</dbReference>
<dbReference type="MIM" id="300234">
    <property type="type" value="gene"/>
</dbReference>
<dbReference type="neXtProt" id="NX_Q9UBK9"/>
<dbReference type="OpenTargets" id="ENSG00000126756"/>
<dbReference type="PharmGKB" id="PA37265"/>
<dbReference type="VEuPathDB" id="HostDB:ENSG00000126756"/>
<dbReference type="eggNOG" id="KOG3047">
    <property type="taxonomic scope" value="Eukaryota"/>
</dbReference>
<dbReference type="GeneTree" id="ENSGT00390000018078"/>
<dbReference type="HOGENOM" id="CLU_121199_1_0_1"/>
<dbReference type="InParanoid" id="Q9UBK9"/>
<dbReference type="OMA" id="HMPDGYK"/>
<dbReference type="OrthoDB" id="433124at2759"/>
<dbReference type="PAN-GO" id="Q9UBK9">
    <property type="GO annotations" value="3 GO annotations based on evolutionary models"/>
</dbReference>
<dbReference type="PhylomeDB" id="Q9UBK9"/>
<dbReference type="TreeFam" id="TF323827"/>
<dbReference type="PathwayCommons" id="Q9UBK9"/>
<dbReference type="Reactome" id="R-HSA-8953750">
    <property type="pathway name" value="Transcriptional Regulation by E2F6"/>
</dbReference>
<dbReference type="SignaLink" id="Q9UBK9"/>
<dbReference type="SIGNOR" id="Q9UBK9"/>
<dbReference type="BioGRID-ORCS" id="8409">
    <property type="hits" value="418 hits in 803 CRISPR screens"/>
</dbReference>
<dbReference type="CD-CODE" id="8C2F96ED">
    <property type="entry name" value="Centrosome"/>
</dbReference>
<dbReference type="ChiTaRS" id="UXT">
    <property type="organism name" value="human"/>
</dbReference>
<dbReference type="GeneWiki" id="UXT"/>
<dbReference type="GenomeRNAi" id="8409"/>
<dbReference type="Pharos" id="Q9UBK9">
    <property type="development level" value="Tbio"/>
</dbReference>
<dbReference type="PRO" id="PR:Q9UBK9"/>
<dbReference type="Proteomes" id="UP000005640">
    <property type="component" value="Chromosome X"/>
</dbReference>
<dbReference type="RNAct" id="Q9UBK9">
    <property type="molecule type" value="protein"/>
</dbReference>
<dbReference type="Bgee" id="ENSG00000126756">
    <property type="expression patterns" value="Expressed in left ovary and 203 other cell types or tissues"/>
</dbReference>
<dbReference type="ExpressionAtlas" id="Q9UBK9">
    <property type="expression patterns" value="baseline and differential"/>
</dbReference>
<dbReference type="GO" id="GO:0005813">
    <property type="term" value="C:centrosome"/>
    <property type="evidence" value="ECO:0000314"/>
    <property type="project" value="HGNC-UCL"/>
</dbReference>
<dbReference type="GO" id="GO:0000785">
    <property type="term" value="C:chromatin"/>
    <property type="evidence" value="ECO:0000318"/>
    <property type="project" value="GO_Central"/>
</dbReference>
<dbReference type="GO" id="GO:0005737">
    <property type="term" value="C:cytoplasm"/>
    <property type="evidence" value="ECO:0000314"/>
    <property type="project" value="UniProtKB"/>
</dbReference>
<dbReference type="GO" id="GO:0005856">
    <property type="term" value="C:cytoskeleton"/>
    <property type="evidence" value="ECO:0000314"/>
    <property type="project" value="HGNC-UCL"/>
</dbReference>
<dbReference type="GO" id="GO:0016592">
    <property type="term" value="C:mediator complex"/>
    <property type="evidence" value="ECO:0000318"/>
    <property type="project" value="GO_Central"/>
</dbReference>
<dbReference type="GO" id="GO:0005654">
    <property type="term" value="C:nucleoplasm"/>
    <property type="evidence" value="ECO:0000304"/>
    <property type="project" value="Reactome"/>
</dbReference>
<dbReference type="GO" id="GO:0005634">
    <property type="term" value="C:nucleus"/>
    <property type="evidence" value="ECO:0000314"/>
    <property type="project" value="UniProtKB"/>
</dbReference>
<dbReference type="GO" id="GO:0101031">
    <property type="term" value="C:protein folding chaperone complex"/>
    <property type="evidence" value="ECO:0000303"/>
    <property type="project" value="ComplexPortal"/>
</dbReference>
<dbReference type="GO" id="GO:1990062">
    <property type="term" value="C:RPAP3/R2TP/prefoldin-like complex"/>
    <property type="evidence" value="ECO:0000353"/>
    <property type="project" value="ComplexPortal"/>
</dbReference>
<dbReference type="GO" id="GO:0000922">
    <property type="term" value="C:spindle pole"/>
    <property type="evidence" value="ECO:0007669"/>
    <property type="project" value="UniProtKB-SubCell"/>
</dbReference>
<dbReference type="GO" id="GO:0048487">
    <property type="term" value="F:beta-tubulin binding"/>
    <property type="evidence" value="ECO:0000314"/>
    <property type="project" value="HGNC-UCL"/>
</dbReference>
<dbReference type="GO" id="GO:0003682">
    <property type="term" value="F:chromatin binding"/>
    <property type="evidence" value="ECO:0000314"/>
    <property type="project" value="UniProtKB"/>
</dbReference>
<dbReference type="GO" id="GO:0008017">
    <property type="term" value="F:microtubule binding"/>
    <property type="evidence" value="ECO:0000304"/>
    <property type="project" value="HGNC-UCL"/>
</dbReference>
<dbReference type="GO" id="GO:0003714">
    <property type="term" value="F:transcription corepressor activity"/>
    <property type="evidence" value="ECO:0000314"/>
    <property type="project" value="UniProtKB"/>
</dbReference>
<dbReference type="GO" id="GO:0006915">
    <property type="term" value="P:apoptotic process"/>
    <property type="evidence" value="ECO:0007669"/>
    <property type="project" value="UniProtKB-KW"/>
</dbReference>
<dbReference type="GO" id="GO:0007098">
    <property type="term" value="P:centrosome cycle"/>
    <property type="evidence" value="ECO:0000315"/>
    <property type="project" value="HGNC-UCL"/>
</dbReference>
<dbReference type="GO" id="GO:0000226">
    <property type="term" value="P:microtubule cytoskeleton organization"/>
    <property type="evidence" value="ECO:0000315"/>
    <property type="project" value="HGNC-UCL"/>
</dbReference>
<dbReference type="GO" id="GO:0047497">
    <property type="term" value="P:mitochondrion transport along microtubule"/>
    <property type="evidence" value="ECO:0000304"/>
    <property type="project" value="HGNC-UCL"/>
</dbReference>
<dbReference type="GO" id="GO:0000122">
    <property type="term" value="P:negative regulation of transcription by RNA polymerase II"/>
    <property type="evidence" value="ECO:0000314"/>
    <property type="project" value="UniProtKB"/>
</dbReference>
<dbReference type="GO" id="GO:0050821">
    <property type="term" value="P:protein stabilization"/>
    <property type="evidence" value="ECO:0000303"/>
    <property type="project" value="ComplexPortal"/>
</dbReference>
<dbReference type="CDD" id="cd23158">
    <property type="entry name" value="Prefoldin_UXT"/>
    <property type="match status" value="1"/>
</dbReference>
<dbReference type="FunFam" id="1.10.287.370:FF:000007">
    <property type="entry name" value="UXT isoform 1"/>
    <property type="match status" value="1"/>
</dbReference>
<dbReference type="Gene3D" id="1.10.287.370">
    <property type="match status" value="1"/>
</dbReference>
<dbReference type="InterPro" id="IPR009053">
    <property type="entry name" value="Prefoldin"/>
</dbReference>
<dbReference type="InterPro" id="IPR004127">
    <property type="entry name" value="Prefoldin_subunit_alpha"/>
</dbReference>
<dbReference type="InterPro" id="IPR003994">
    <property type="entry name" value="UXT"/>
</dbReference>
<dbReference type="PANTHER" id="PTHR13345">
    <property type="entry name" value="MEDIATOR OF RNA POLYMERASE II TRANSCRIPTION SUBUNIT 10"/>
    <property type="match status" value="1"/>
</dbReference>
<dbReference type="PANTHER" id="PTHR13345:SF9">
    <property type="entry name" value="PROTEIN UXT"/>
    <property type="match status" value="1"/>
</dbReference>
<dbReference type="Pfam" id="PF02996">
    <property type="entry name" value="Prefoldin"/>
    <property type="match status" value="1"/>
</dbReference>
<dbReference type="PRINTS" id="PR01502">
    <property type="entry name" value="UXTPROTEIN"/>
</dbReference>
<dbReference type="SUPFAM" id="SSF46579">
    <property type="entry name" value="Prefoldin"/>
    <property type="match status" value="1"/>
</dbReference>
<proteinExistence type="evidence at protein level"/>
<reference key="1">
    <citation type="journal article" date="1999" name="Genomics">
        <title>Cloning and characterization of UXT, a novel gene in human Xp11, which is widely and abundantly expressed in tumor tissue.</title>
        <authorList>
            <person name="Schroer A."/>
            <person name="Schneider S."/>
            <person name="Ropers H.-H."/>
            <person name="Nothwang H.G."/>
        </authorList>
    </citation>
    <scope>NUCLEOTIDE SEQUENCE [MRNA] (ISOFORM 2)</scope>
    <scope>TISSUE SPECIFICITY</scope>
</reference>
<reference key="2">
    <citation type="journal article" date="2002" name="Mol. Biol. Cell">
        <title>Identification and characterization of ART-27, a novel coactivator for the androgen receptor N terminus.</title>
        <authorList>
            <person name="Markus S.M."/>
            <person name="Taneja S.S."/>
            <person name="Logan S.K."/>
            <person name="Li W."/>
            <person name="Ha S."/>
            <person name="Hittelman A.B."/>
            <person name="Rogatsky I."/>
            <person name="Garabedian M.J."/>
        </authorList>
    </citation>
    <scope>NUCLEOTIDE SEQUENCE [MRNA] (ISOFORM 2)</scope>
    <scope>FUNCTION</scope>
    <scope>SUBCELLULAR LOCATION</scope>
    <scope>TISSUE SPECIFICITY</scope>
    <scope>INTERACTION WITH AR</scope>
</reference>
<reference key="3">
    <citation type="journal article" date="2007" name="FEBS J.">
        <title>UXT interacts with the transcriptional repressor protein EVI1 and suppresses cell transformation.</title>
        <authorList>
            <person name="McGilvray R."/>
            <person name="Walker M."/>
            <person name="Bartholomew C."/>
        </authorList>
    </citation>
    <scope>NUCLEOTIDE SEQUENCE [MRNA] (ISOFORM 2)</scope>
    <scope>FUNCTION</scope>
    <scope>TISSUE SPECIFICITY</scope>
    <scope>INTERACTION WITH MECOM</scope>
</reference>
<reference key="4">
    <citation type="journal article" date="2000" name="Genome Res.">
        <title>Cloning and functional analysis of cDNAs with open reading frames for 300 previously undefined genes expressed in CD34+ hematopoietic stem/progenitor cells.</title>
        <authorList>
            <person name="Zhang Q.-H."/>
            <person name="Ye M."/>
            <person name="Wu X.-Y."/>
            <person name="Ren S.-X."/>
            <person name="Zhao M."/>
            <person name="Zhao C.-J."/>
            <person name="Fu G."/>
            <person name="Shen Y."/>
            <person name="Fan H.-Y."/>
            <person name="Lu G."/>
            <person name="Zhong M."/>
            <person name="Xu X.-R."/>
            <person name="Han Z.-G."/>
            <person name="Zhang J.-W."/>
            <person name="Tao J."/>
            <person name="Huang Q.-H."/>
            <person name="Zhou J."/>
            <person name="Hu G.-X."/>
            <person name="Gu J."/>
            <person name="Chen S.-J."/>
            <person name="Chen Z."/>
        </authorList>
    </citation>
    <scope>NUCLEOTIDE SEQUENCE [LARGE SCALE MRNA] (ISOFORM 2)</scope>
    <source>
        <tissue>Umbilical cord blood</tissue>
    </source>
</reference>
<reference key="5">
    <citation type="journal article" date="2011" name="Mol. Biol. Cell">
        <title>UXT-V1 protects cells against TNF-induced apoptosis through modulating complex II formation.</title>
        <authorList>
            <person name="Huang Y."/>
            <person name="Chen L."/>
            <person name="Zhou Y."/>
            <person name="Liu H."/>
            <person name="Yang J."/>
            <person name="Liu Z."/>
            <person name="Wang C."/>
        </authorList>
    </citation>
    <scope>NUCLEOTIDE SEQUENCE [MRNA] (ISOFORM 1)</scope>
    <scope>FUNCTION (ISOFORMS 1 AND 2)</scope>
    <scope>IDENTIFICATION IN COMPLEX I</scope>
    <scope>INTERACTION WITH TRAF2</scope>
    <scope>SUBCELLULAR LOCATION</scope>
    <scope>IDENTIFICATION OF ISOFORM 1</scope>
</reference>
<reference key="6">
    <citation type="journal article" date="2004" name="Nat. Genet.">
        <title>Complete sequencing and characterization of 21,243 full-length human cDNAs.</title>
        <authorList>
            <person name="Ota T."/>
            <person name="Suzuki Y."/>
            <person name="Nishikawa T."/>
            <person name="Otsuki T."/>
            <person name="Sugiyama T."/>
            <person name="Irie R."/>
            <person name="Wakamatsu A."/>
            <person name="Hayashi K."/>
            <person name="Sato H."/>
            <person name="Nagai K."/>
            <person name="Kimura K."/>
            <person name="Makita H."/>
            <person name="Sekine M."/>
            <person name="Obayashi M."/>
            <person name="Nishi T."/>
            <person name="Shibahara T."/>
            <person name="Tanaka T."/>
            <person name="Ishii S."/>
            <person name="Yamamoto J."/>
            <person name="Saito K."/>
            <person name="Kawai Y."/>
            <person name="Isono Y."/>
            <person name="Nakamura Y."/>
            <person name="Nagahari K."/>
            <person name="Murakami K."/>
            <person name="Yasuda T."/>
            <person name="Iwayanagi T."/>
            <person name="Wagatsuma M."/>
            <person name="Shiratori A."/>
            <person name="Sudo H."/>
            <person name="Hosoiri T."/>
            <person name="Kaku Y."/>
            <person name="Kodaira H."/>
            <person name="Kondo H."/>
            <person name="Sugawara M."/>
            <person name="Takahashi M."/>
            <person name="Kanda K."/>
            <person name="Yokoi T."/>
            <person name="Furuya T."/>
            <person name="Kikkawa E."/>
            <person name="Omura Y."/>
            <person name="Abe K."/>
            <person name="Kamihara K."/>
            <person name="Katsuta N."/>
            <person name="Sato K."/>
            <person name="Tanikawa M."/>
            <person name="Yamazaki M."/>
            <person name="Ninomiya K."/>
            <person name="Ishibashi T."/>
            <person name="Yamashita H."/>
            <person name="Murakawa K."/>
            <person name="Fujimori K."/>
            <person name="Tanai H."/>
            <person name="Kimata M."/>
            <person name="Watanabe M."/>
            <person name="Hiraoka S."/>
            <person name="Chiba Y."/>
            <person name="Ishida S."/>
            <person name="Ono Y."/>
            <person name="Takiguchi S."/>
            <person name="Watanabe S."/>
            <person name="Yosida M."/>
            <person name="Hotuta T."/>
            <person name="Kusano J."/>
            <person name="Kanehori K."/>
            <person name="Takahashi-Fujii A."/>
            <person name="Hara H."/>
            <person name="Tanase T.-O."/>
            <person name="Nomura Y."/>
            <person name="Togiya S."/>
            <person name="Komai F."/>
            <person name="Hara R."/>
            <person name="Takeuchi K."/>
            <person name="Arita M."/>
            <person name="Imose N."/>
            <person name="Musashino K."/>
            <person name="Yuuki H."/>
            <person name="Oshima A."/>
            <person name="Sasaki N."/>
            <person name="Aotsuka S."/>
            <person name="Yoshikawa Y."/>
            <person name="Matsunawa H."/>
            <person name="Ichihara T."/>
            <person name="Shiohata N."/>
            <person name="Sano S."/>
            <person name="Moriya S."/>
            <person name="Momiyama H."/>
            <person name="Satoh N."/>
            <person name="Takami S."/>
            <person name="Terashima Y."/>
            <person name="Suzuki O."/>
            <person name="Nakagawa S."/>
            <person name="Senoh A."/>
            <person name="Mizoguchi H."/>
            <person name="Goto Y."/>
            <person name="Shimizu F."/>
            <person name="Wakebe H."/>
            <person name="Hishigaki H."/>
            <person name="Watanabe T."/>
            <person name="Sugiyama A."/>
            <person name="Takemoto M."/>
            <person name="Kawakami B."/>
            <person name="Yamazaki M."/>
            <person name="Watanabe K."/>
            <person name="Kumagai A."/>
            <person name="Itakura S."/>
            <person name="Fukuzumi Y."/>
            <person name="Fujimori Y."/>
            <person name="Komiyama M."/>
            <person name="Tashiro H."/>
            <person name="Tanigami A."/>
            <person name="Fujiwara T."/>
            <person name="Ono T."/>
            <person name="Yamada K."/>
            <person name="Fujii Y."/>
            <person name="Ozaki K."/>
            <person name="Hirao M."/>
            <person name="Ohmori Y."/>
            <person name="Kawabata A."/>
            <person name="Hikiji T."/>
            <person name="Kobatake N."/>
            <person name="Inagaki H."/>
            <person name="Ikema Y."/>
            <person name="Okamoto S."/>
            <person name="Okitani R."/>
            <person name="Kawakami T."/>
            <person name="Noguchi S."/>
            <person name="Itoh T."/>
            <person name="Shigeta K."/>
            <person name="Senba T."/>
            <person name="Matsumura K."/>
            <person name="Nakajima Y."/>
            <person name="Mizuno T."/>
            <person name="Morinaga M."/>
            <person name="Sasaki M."/>
            <person name="Togashi T."/>
            <person name="Oyama M."/>
            <person name="Hata H."/>
            <person name="Watanabe M."/>
            <person name="Komatsu T."/>
            <person name="Mizushima-Sugano J."/>
            <person name="Satoh T."/>
            <person name="Shirai Y."/>
            <person name="Takahashi Y."/>
            <person name="Nakagawa K."/>
            <person name="Okumura K."/>
            <person name="Nagase T."/>
            <person name="Nomura N."/>
            <person name="Kikuchi H."/>
            <person name="Masuho Y."/>
            <person name="Yamashita R."/>
            <person name="Nakai K."/>
            <person name="Yada T."/>
            <person name="Nakamura Y."/>
            <person name="Ohara O."/>
            <person name="Isogai T."/>
            <person name="Sugano S."/>
        </authorList>
    </citation>
    <scope>NUCLEOTIDE SEQUENCE [LARGE SCALE MRNA] (ISOFORM 2)</scope>
    <source>
        <tissue>Mammary gland</tissue>
    </source>
</reference>
<reference key="7">
    <citation type="journal article" date="2005" name="Nature">
        <title>The DNA sequence of the human X chromosome.</title>
        <authorList>
            <person name="Ross M.T."/>
            <person name="Grafham D.V."/>
            <person name="Coffey A.J."/>
            <person name="Scherer S."/>
            <person name="McLay K."/>
            <person name="Muzny D."/>
            <person name="Platzer M."/>
            <person name="Howell G.R."/>
            <person name="Burrows C."/>
            <person name="Bird C.P."/>
            <person name="Frankish A."/>
            <person name="Lovell F.L."/>
            <person name="Howe K.L."/>
            <person name="Ashurst J.L."/>
            <person name="Fulton R.S."/>
            <person name="Sudbrak R."/>
            <person name="Wen G."/>
            <person name="Jones M.C."/>
            <person name="Hurles M.E."/>
            <person name="Andrews T.D."/>
            <person name="Scott C.E."/>
            <person name="Searle S."/>
            <person name="Ramser J."/>
            <person name="Whittaker A."/>
            <person name="Deadman R."/>
            <person name="Carter N.P."/>
            <person name="Hunt S.E."/>
            <person name="Chen R."/>
            <person name="Cree A."/>
            <person name="Gunaratne P."/>
            <person name="Havlak P."/>
            <person name="Hodgson A."/>
            <person name="Metzker M.L."/>
            <person name="Richards S."/>
            <person name="Scott G."/>
            <person name="Steffen D."/>
            <person name="Sodergren E."/>
            <person name="Wheeler D.A."/>
            <person name="Worley K.C."/>
            <person name="Ainscough R."/>
            <person name="Ambrose K.D."/>
            <person name="Ansari-Lari M.A."/>
            <person name="Aradhya S."/>
            <person name="Ashwell R.I."/>
            <person name="Babbage A.K."/>
            <person name="Bagguley C.L."/>
            <person name="Ballabio A."/>
            <person name="Banerjee R."/>
            <person name="Barker G.E."/>
            <person name="Barlow K.F."/>
            <person name="Barrett I.P."/>
            <person name="Bates K.N."/>
            <person name="Beare D.M."/>
            <person name="Beasley H."/>
            <person name="Beasley O."/>
            <person name="Beck A."/>
            <person name="Bethel G."/>
            <person name="Blechschmidt K."/>
            <person name="Brady N."/>
            <person name="Bray-Allen S."/>
            <person name="Bridgeman A.M."/>
            <person name="Brown A.J."/>
            <person name="Brown M.J."/>
            <person name="Bonnin D."/>
            <person name="Bruford E.A."/>
            <person name="Buhay C."/>
            <person name="Burch P."/>
            <person name="Burford D."/>
            <person name="Burgess J."/>
            <person name="Burrill W."/>
            <person name="Burton J."/>
            <person name="Bye J.M."/>
            <person name="Carder C."/>
            <person name="Carrel L."/>
            <person name="Chako J."/>
            <person name="Chapman J.C."/>
            <person name="Chavez D."/>
            <person name="Chen E."/>
            <person name="Chen G."/>
            <person name="Chen Y."/>
            <person name="Chen Z."/>
            <person name="Chinault C."/>
            <person name="Ciccodicola A."/>
            <person name="Clark S.Y."/>
            <person name="Clarke G."/>
            <person name="Clee C.M."/>
            <person name="Clegg S."/>
            <person name="Clerc-Blankenburg K."/>
            <person name="Clifford K."/>
            <person name="Cobley V."/>
            <person name="Cole C.G."/>
            <person name="Conquer J.S."/>
            <person name="Corby N."/>
            <person name="Connor R.E."/>
            <person name="David R."/>
            <person name="Davies J."/>
            <person name="Davis C."/>
            <person name="Davis J."/>
            <person name="Delgado O."/>
            <person name="Deshazo D."/>
            <person name="Dhami P."/>
            <person name="Ding Y."/>
            <person name="Dinh H."/>
            <person name="Dodsworth S."/>
            <person name="Draper H."/>
            <person name="Dugan-Rocha S."/>
            <person name="Dunham A."/>
            <person name="Dunn M."/>
            <person name="Durbin K.J."/>
            <person name="Dutta I."/>
            <person name="Eades T."/>
            <person name="Ellwood M."/>
            <person name="Emery-Cohen A."/>
            <person name="Errington H."/>
            <person name="Evans K.L."/>
            <person name="Faulkner L."/>
            <person name="Francis F."/>
            <person name="Frankland J."/>
            <person name="Fraser A.E."/>
            <person name="Galgoczy P."/>
            <person name="Gilbert J."/>
            <person name="Gill R."/>
            <person name="Gloeckner G."/>
            <person name="Gregory S.G."/>
            <person name="Gribble S."/>
            <person name="Griffiths C."/>
            <person name="Grocock R."/>
            <person name="Gu Y."/>
            <person name="Gwilliam R."/>
            <person name="Hamilton C."/>
            <person name="Hart E.A."/>
            <person name="Hawes A."/>
            <person name="Heath P.D."/>
            <person name="Heitmann K."/>
            <person name="Hennig S."/>
            <person name="Hernandez J."/>
            <person name="Hinzmann B."/>
            <person name="Ho S."/>
            <person name="Hoffs M."/>
            <person name="Howden P.J."/>
            <person name="Huckle E.J."/>
            <person name="Hume J."/>
            <person name="Hunt P.J."/>
            <person name="Hunt A.R."/>
            <person name="Isherwood J."/>
            <person name="Jacob L."/>
            <person name="Johnson D."/>
            <person name="Jones S."/>
            <person name="de Jong P.J."/>
            <person name="Joseph S.S."/>
            <person name="Keenan S."/>
            <person name="Kelly S."/>
            <person name="Kershaw J.K."/>
            <person name="Khan Z."/>
            <person name="Kioschis P."/>
            <person name="Klages S."/>
            <person name="Knights A.J."/>
            <person name="Kosiura A."/>
            <person name="Kovar-Smith C."/>
            <person name="Laird G.K."/>
            <person name="Langford C."/>
            <person name="Lawlor S."/>
            <person name="Leversha M."/>
            <person name="Lewis L."/>
            <person name="Liu W."/>
            <person name="Lloyd C."/>
            <person name="Lloyd D.M."/>
            <person name="Loulseged H."/>
            <person name="Loveland J.E."/>
            <person name="Lovell J.D."/>
            <person name="Lozado R."/>
            <person name="Lu J."/>
            <person name="Lyne R."/>
            <person name="Ma J."/>
            <person name="Maheshwari M."/>
            <person name="Matthews L.H."/>
            <person name="McDowall J."/>
            <person name="McLaren S."/>
            <person name="McMurray A."/>
            <person name="Meidl P."/>
            <person name="Meitinger T."/>
            <person name="Milne S."/>
            <person name="Miner G."/>
            <person name="Mistry S.L."/>
            <person name="Morgan M."/>
            <person name="Morris S."/>
            <person name="Mueller I."/>
            <person name="Mullikin J.C."/>
            <person name="Nguyen N."/>
            <person name="Nordsiek G."/>
            <person name="Nyakatura G."/>
            <person name="O'dell C.N."/>
            <person name="Okwuonu G."/>
            <person name="Palmer S."/>
            <person name="Pandian R."/>
            <person name="Parker D."/>
            <person name="Parrish J."/>
            <person name="Pasternak S."/>
            <person name="Patel D."/>
            <person name="Pearce A.V."/>
            <person name="Pearson D.M."/>
            <person name="Pelan S.E."/>
            <person name="Perez L."/>
            <person name="Porter K.M."/>
            <person name="Ramsey Y."/>
            <person name="Reichwald K."/>
            <person name="Rhodes S."/>
            <person name="Ridler K.A."/>
            <person name="Schlessinger D."/>
            <person name="Schueler M.G."/>
            <person name="Sehra H.K."/>
            <person name="Shaw-Smith C."/>
            <person name="Shen H."/>
            <person name="Sheridan E.M."/>
            <person name="Shownkeen R."/>
            <person name="Skuce C.D."/>
            <person name="Smith M.L."/>
            <person name="Sotheran E.C."/>
            <person name="Steingruber H.E."/>
            <person name="Steward C.A."/>
            <person name="Storey R."/>
            <person name="Swann R.M."/>
            <person name="Swarbreck D."/>
            <person name="Tabor P.E."/>
            <person name="Taudien S."/>
            <person name="Taylor T."/>
            <person name="Teague B."/>
            <person name="Thomas K."/>
            <person name="Thorpe A."/>
            <person name="Timms K."/>
            <person name="Tracey A."/>
            <person name="Trevanion S."/>
            <person name="Tromans A.C."/>
            <person name="d'Urso M."/>
            <person name="Verduzco D."/>
            <person name="Villasana D."/>
            <person name="Waldron L."/>
            <person name="Wall M."/>
            <person name="Wang Q."/>
            <person name="Warren J."/>
            <person name="Warry G.L."/>
            <person name="Wei X."/>
            <person name="West A."/>
            <person name="Whitehead S.L."/>
            <person name="Whiteley M.N."/>
            <person name="Wilkinson J.E."/>
            <person name="Willey D.L."/>
            <person name="Williams G."/>
            <person name="Williams L."/>
            <person name="Williamson A."/>
            <person name="Williamson H."/>
            <person name="Wilming L."/>
            <person name="Woodmansey R.L."/>
            <person name="Wray P.W."/>
            <person name="Yen J."/>
            <person name="Zhang J."/>
            <person name="Zhou J."/>
            <person name="Zoghbi H."/>
            <person name="Zorilla S."/>
            <person name="Buck D."/>
            <person name="Reinhardt R."/>
            <person name="Poustka A."/>
            <person name="Rosenthal A."/>
            <person name="Lehrach H."/>
            <person name="Meindl A."/>
            <person name="Minx P.J."/>
            <person name="Hillier L.W."/>
            <person name="Willard H.F."/>
            <person name="Wilson R.K."/>
            <person name="Waterston R.H."/>
            <person name="Rice C.M."/>
            <person name="Vaudin M."/>
            <person name="Coulson A."/>
            <person name="Nelson D.L."/>
            <person name="Weinstock G."/>
            <person name="Sulston J.E."/>
            <person name="Durbin R.M."/>
            <person name="Hubbard T."/>
            <person name="Gibbs R.A."/>
            <person name="Beck S."/>
            <person name="Rogers J."/>
            <person name="Bentley D.R."/>
        </authorList>
    </citation>
    <scope>NUCLEOTIDE SEQUENCE [LARGE SCALE GENOMIC DNA]</scope>
</reference>
<reference key="8">
    <citation type="submission" date="2005-07" db="EMBL/GenBank/DDBJ databases">
        <authorList>
            <person name="Mural R.J."/>
            <person name="Istrail S."/>
            <person name="Sutton G.G."/>
            <person name="Florea L."/>
            <person name="Halpern A.L."/>
            <person name="Mobarry C.M."/>
            <person name="Lippert R."/>
            <person name="Walenz B."/>
            <person name="Shatkay H."/>
            <person name="Dew I."/>
            <person name="Miller J.R."/>
            <person name="Flanigan M.J."/>
            <person name="Edwards N.J."/>
            <person name="Bolanos R."/>
            <person name="Fasulo D."/>
            <person name="Halldorsson B.V."/>
            <person name="Hannenhalli S."/>
            <person name="Turner R."/>
            <person name="Yooseph S."/>
            <person name="Lu F."/>
            <person name="Nusskern D.R."/>
            <person name="Shue B.C."/>
            <person name="Zheng X.H."/>
            <person name="Zhong F."/>
            <person name="Delcher A.L."/>
            <person name="Huson D.H."/>
            <person name="Kravitz S.A."/>
            <person name="Mouchard L."/>
            <person name="Reinert K."/>
            <person name="Remington K.A."/>
            <person name="Clark A.G."/>
            <person name="Waterman M.S."/>
            <person name="Eichler E.E."/>
            <person name="Adams M.D."/>
            <person name="Hunkapiller M.W."/>
            <person name="Myers E.W."/>
            <person name="Venter J.C."/>
        </authorList>
    </citation>
    <scope>NUCLEOTIDE SEQUENCE [LARGE SCALE GENOMIC DNA]</scope>
</reference>
<reference key="9">
    <citation type="journal article" date="2004" name="Genome Res.">
        <title>The status, quality, and expansion of the NIH full-length cDNA project: the Mammalian Gene Collection (MGC).</title>
        <authorList>
            <consortium name="The MGC Project Team"/>
        </authorList>
    </citation>
    <scope>NUCLEOTIDE SEQUENCE [LARGE SCALE MRNA] (ISOFORM 2)</scope>
    <source>
        <tissue>Placenta</tissue>
    </source>
</reference>
<reference key="10">
    <citation type="journal article" date="2002" name="Genomics">
        <title>Sequence analysis of LRPPRC and its SEC1 domain interaction partners suggests roles in cytoskeletal organization, vesicular trafficking, nucleocytosolic shuttling, and chromosome activity.</title>
        <authorList>
            <person name="Liu L."/>
            <person name="McKeehan W.L."/>
        </authorList>
    </citation>
    <scope>FUNCTION</scope>
    <scope>INTERACTION WITH LRPPRC</scope>
    <scope>TISSUE SPECIFICITY</scope>
</reference>
<reference key="11">
    <citation type="journal article" date="2005" name="Mol. Biol. Cell">
        <title>UXT is a novel centrosomal protein essential for cell viability.</title>
        <authorList>
            <person name="Zhao H."/>
            <person name="Wang Q."/>
            <person name="Zhang H."/>
            <person name="Liu Q."/>
            <person name="Du X."/>
            <person name="Richter M."/>
            <person name="Greene M.I."/>
        </authorList>
    </citation>
    <scope>FUNCTION</scope>
    <scope>SUBUNIT</scope>
    <scope>SUBCELLULAR LOCATION</scope>
    <scope>TISSUE SPECIFICITY</scope>
    <scope>MUTAGENESIS OF LEU-50 AND LEU-59</scope>
</reference>
<reference key="12">
    <citation type="journal article" date="2007" name="In Vitro Cell. Dev. Biol. Anim.">
        <title>UXT (Ubiquitously Expressed Transcript) causes mitochondrial aggregation.</title>
        <authorList>
            <person name="Moss T.N."/>
            <person name="Vo A."/>
            <person name="McKeehan W.L."/>
            <person name="Liu L."/>
        </authorList>
    </citation>
    <scope>FUNCTION</scope>
    <scope>INTERACTION WITH LRPPRC</scope>
</reference>
<reference key="13">
    <citation type="journal article" date="2007" name="J. Cell Biol.">
        <title>UXT is a novel and essential cofactor in the NF-kappaB transcriptional enhanceosome.</title>
        <authorList>
            <person name="Sun S."/>
            <person name="Tang Y."/>
            <person name="Lou X."/>
            <person name="Zhu L."/>
            <person name="Yang K."/>
            <person name="Zhang B."/>
            <person name="Shi H."/>
            <person name="Wang C."/>
        </authorList>
    </citation>
    <scope>FUNCTION</scope>
    <scope>INTERACTION WITH RELA</scope>
    <scope>SUBCELLULAR LOCATION</scope>
</reference>
<reference key="14">
    <citation type="journal article" date="2011" name="BMC Syst. Biol.">
        <title>Initial characterization of the human central proteome.</title>
        <authorList>
            <person name="Burkard T.R."/>
            <person name="Planyavsky M."/>
            <person name="Kaupe I."/>
            <person name="Breitwieser F.P."/>
            <person name="Buerckstuemmer T."/>
            <person name="Bennett K.L."/>
            <person name="Superti-Furga G."/>
            <person name="Colinge J."/>
        </authorList>
    </citation>
    <scope>IDENTIFICATION BY MASS SPECTROMETRY [LARGE SCALE ANALYSIS]</scope>
</reference>
<reference key="15">
    <citation type="journal article" date="2011" name="Mol. Cell. Biol.">
        <title>Regulation of androgen receptor-mediated transcription by RPB5 binding protein URI/RMP.</title>
        <authorList>
            <person name="Mita P."/>
            <person name="Savas J.N."/>
            <person name="Djouder N."/>
            <person name="Yates J.R. III"/>
            <person name="Ha S."/>
            <person name="Ruoff R."/>
            <person name="Schafler E.D."/>
            <person name="Nwachukwu J.C."/>
            <person name="Tanese N."/>
            <person name="Cowan N.J."/>
            <person name="Zavadil J."/>
            <person name="Garabedian M.J."/>
            <person name="Logan S.K."/>
        </authorList>
    </citation>
    <scope>FUNCTION</scope>
    <scope>INTERACTION WITH URI1</scope>
    <scope>TISSUE SPECIFICITY</scope>
</reference>
<reference key="16">
    <citation type="journal article" date="2017" name="J. Cell. Biochem.">
        <title>UXT is a LOX-PP interacting protein that modulates estrogen receptor alpha activity in breast cancer Cells.</title>
        <authorList>
            <person name="Sanchez-Morgan N."/>
            <person name="Kirsch K.H."/>
            <person name="Trackman P.C."/>
            <person name="Sonenshein G.E."/>
        </authorList>
    </citation>
    <scope>FUNCTION</scope>
    <scope>INTERACTION WITH ESR1</scope>
    <scope>SUBCELLULAR LOCATION</scope>
    <scope>TISSUE SPECIFICITY</scope>
</reference>
<reference key="17">
    <citation type="journal article" date="2020" name="J. Proteome Res.">
        <title>Upstream ORF-Encoded ASDURF Is a Novel Prefoldin-like Subunit of the PAQosome.</title>
        <authorList>
            <person name="Cloutier P."/>
            <person name="Poitras C."/>
            <person name="Faubert D."/>
            <person name="Bouchard A."/>
            <person name="Blanchette M."/>
            <person name="Gauthier M.S."/>
            <person name="Coulombe B."/>
        </authorList>
    </citation>
    <scope>IDENTIFICATION IN THE PAQOSOME COMPLEX</scope>
    <scope>IDENTIFICATION BY MASS SPECTROMETRY</scope>
</reference>
<reference key="18">
    <citation type="journal article" date="2021" name="Biochim. Biophys. Acta">
        <title>The E3 ubiquitin ligase SCF(Fbxo7) mediates proteasomal degradation of UXT isoform 2 (UXT-V2) to inhibit the NF-kappaB signaling pathway.</title>
        <authorList>
            <person name="Spagnol V."/>
            <person name="Oliveira C.A.B."/>
            <person name="Randle S.J."/>
            <person name="Passos P.M.S."/>
            <person name="Correia C.R.S.T.B."/>
            <person name="Simaroli N.B."/>
            <person name="Oliveira J.S."/>
            <person name="Mevissen T.E.T."/>
            <person name="Medeiros A.C."/>
            <person name="Gomes M.D."/>
            <person name="Komander D."/>
            <person name="Laman H."/>
            <person name="Teixeira F.R."/>
        </authorList>
    </citation>
    <scope>UBIQUITINATION (ISOFORM 2)</scope>
    <scope>SUBCELLULAR LOCATION (ISOFORM 2)</scope>
</reference>
<accession>Q9UBK9</accession>
<accession>A0A0C4DFR8</accession>
<accession>B2R561</accession>
<accession>Q5JZG3</accession>
<accession>Q9Y6E5</accession>
<name>UXT_HUMAN</name>
<evidence type="ECO:0000269" key="1">
    <source>
    </source>
</evidence>
<evidence type="ECO:0000269" key="2">
    <source>
    </source>
</evidence>
<evidence type="ECO:0000269" key="3">
    <source>
    </source>
</evidence>
<evidence type="ECO:0000269" key="4">
    <source>
    </source>
</evidence>
<evidence type="ECO:0000269" key="5">
    <source>
    </source>
</evidence>
<evidence type="ECO:0000269" key="6">
    <source>
    </source>
</evidence>
<evidence type="ECO:0000269" key="7">
    <source>
    </source>
</evidence>
<evidence type="ECO:0000269" key="8">
    <source>
    </source>
</evidence>
<evidence type="ECO:0000269" key="9">
    <source>
    </source>
</evidence>
<evidence type="ECO:0000269" key="10">
    <source>
    </source>
</evidence>
<evidence type="ECO:0000269" key="11">
    <source>
    </source>
</evidence>
<evidence type="ECO:0000269" key="12">
    <source>
    </source>
</evidence>
<evidence type="ECO:0000303" key="13">
    <source>
    </source>
</evidence>
<evidence type="ECO:0000303" key="14">
    <source>
    </source>
</evidence>
<evidence type="ECO:0000305" key="15"/>
<evidence type="ECO:0000305" key="16">
    <source>
    </source>
</evidence>
<feature type="chain" id="PRO_0000065751" description="Protein UXT">
    <location>
        <begin position="1"/>
        <end position="157"/>
    </location>
</feature>
<feature type="splice variant" id="VSP_059081" description="In isoform 1." evidence="15">
    <original>M</original>
    <variation>MVFPLPTPQEPIM</variation>
    <location>
        <position position="1"/>
    </location>
</feature>
<feature type="mutagenesis site" description="Causes dislocation from the centrosome; when associated with L-59." evidence="4">
    <original>L</original>
    <variation>P</variation>
    <location>
        <position position="50"/>
    </location>
</feature>
<feature type="mutagenesis site" description="Causes dislocation from the centrosome; when associated with L-50." evidence="4">
    <original>L</original>
    <variation>P</variation>
    <location>
        <position position="59"/>
    </location>
</feature>
<gene>
    <name type="primary">UXT</name>
    <name type="ORF">HSPC024</name>
</gene>
<comment type="function">
    <text evidence="2 3 4 5 6 7 8 9 10">Involved in gene transcription regulation (PubMed:21730289, PubMed:28106301). Acts in concert with the corepressor URI1 to regulate androgen receptor AR-mediated transcription (PubMed:11854421, PubMed:21730289). Together with URI1, associates with chromatin to the NKX3-1 promoter region (PubMed:21730289). Negatively regulates the transcriptional activity of the estrogen receptor ESR1 by inducing its translocation into the cytoplasm (PubMed:28106301). May act as nuclear chaperone that facilitates the formation of the NF-kappa-B enhanceosome and thus positively regulates NF-kappa-B transcription activity (PubMed:17620405, PubMed:21307340). Potential component of mitochondrial-associated LRPPRC, a multidomain organizer that potentially integrates mitochondria and the microtubular cytoskeleton with chromosome remodeling (PubMed:17554592). Increasing concentrations of UXT contributes to progressive aggregation of mitochondria and cell death potentially through its association with LRPPRC (PubMed:17554592). Suppresses cell transformation and it might mediate this function by interaction and inhibition of the biological activity of cell proliferation and survival stimulatory factors like MECOM (PubMed:17635584).</text>
</comment>
<comment type="function">
    <molecule>Isoform 1</molecule>
    <text evidence="8">Plays a role in protecting cells against TNF-alpha-induced apoptosis by preventing the recruitment of FADD and caspase 8 to the apoptotic complex I, composed of TRADD, TRAF2 and RIPK1/RIP.</text>
</comment>
<comment type="subunit">
    <text evidence="2 3 4 5 6 7 9 10 11">Homohexamer (PubMed:16221885). Component of the PAQosome complex which is responsible for the biogenesis of several protein complexes and which consists of R2TP complex members RUVBL1, RUVBL2, RPAP3 and PIH1D1, URI complex members PFDN2, PFDN6, PDRG1, UXT and URI1 as well as ASDURF, POLR2E and DNAAF10/WDR92 (PubMed:31738558). Interacts with LRPPRC (PubMed:11827465, PubMed:17554592). Interacts with androgen receptor AR (via N-terminus) (PubMed:11854421). Interacts with estrogen receptor ESR1; the interaction relocalizes ESR1 from the nucleus to the cytoplasm (PubMed:28106301). In the nucleus, interacts specifically with RELA (via RHD domain) and forms a dynamic complex with NF-kappa-B and is recruited to the NF-kappa-B enhanceosome upon stimulation (PubMed:17620405). Interacts with MECOM (PubMed:17635584). Interacts with URI1 (PubMed:21730289).</text>
</comment>
<comment type="subunit">
    <molecule>Isoform 1</molecule>
    <text evidence="8">Part of complex I composed of TNF-alpha receptor TNFRSF1A, TRADD, TRAF2 and RIPK1 formed in response to TNF-alpha stimulation. Within the complex, interacts (via TPQE motif) with TRAF2; the interaction prevents the recruitment of FADD and CASP8/caspase 8 to complex I.</text>
</comment>
<comment type="interaction">
    <interactant intactId="EBI-357355">
        <id>Q9UBK9</id>
    </interactant>
    <interactant intactId="EBI-1176455">
        <id>P63172</id>
        <label>DYNLT1</label>
    </interactant>
    <organismsDiffer>false</organismsDiffer>
    <experiments>3</experiments>
</comment>
<comment type="interaction">
    <interactant intactId="EBI-357355">
        <id>Q9UBK9</id>
    </interactant>
    <interactant intactId="EBI-78473">
        <id>P03372</id>
        <label>ESR1</label>
    </interactant>
    <organismsDiffer>false</organismsDiffer>
    <experiments>2</experiments>
</comment>
<comment type="interaction">
    <interactant intactId="EBI-357355">
        <id>Q9UBK9</id>
    </interactant>
    <interactant intactId="EBI-948001">
        <id>Q15323</id>
        <label>KRT31</label>
    </interactant>
    <organismsDiffer>false</organismsDiffer>
    <experiments>6</experiments>
</comment>
<comment type="interaction">
    <interactant intactId="EBI-357355">
        <id>Q9UBK9</id>
    </interactant>
    <interactant intactId="EBI-10171697">
        <id>Q6A162</id>
        <label>KRT40</label>
    </interactant>
    <organismsDiffer>false</organismsDiffer>
    <experiments>3</experiments>
</comment>
<comment type="interaction">
    <interactant intactId="EBI-357355">
        <id>Q9UBK9</id>
    </interactant>
    <interactant intactId="EBI-11749135">
        <id>Q8IUG1</id>
        <label>KRTAP1-3</label>
    </interactant>
    <organismsDiffer>false</organismsDiffer>
    <experiments>3</experiments>
</comment>
<comment type="interaction">
    <interactant intactId="EBI-357355">
        <id>Q9UBK9</id>
    </interactant>
    <interactant intactId="EBI-10172290">
        <id>P60409</id>
        <label>KRTAP10-7</label>
    </interactant>
    <organismsDiffer>false</organismsDiffer>
    <experiments>3</experiments>
</comment>
<comment type="interaction">
    <interactant intactId="EBI-357355">
        <id>Q9UBK9</id>
    </interactant>
    <interactant intactId="EBI-10171774">
        <id>P60410</id>
        <label>KRTAP10-8</label>
    </interactant>
    <organismsDiffer>false</organismsDiffer>
    <experiments>6</experiments>
</comment>
<comment type="interaction">
    <interactant intactId="EBI-357355">
        <id>Q9UBK9</id>
    </interactant>
    <interactant intactId="EBI-11953334">
        <id>P60328</id>
        <label>KRTAP12-3</label>
    </interactant>
    <organismsDiffer>false</organismsDiffer>
    <experiments>4</experiments>
</comment>
<comment type="interaction">
    <interactant intactId="EBI-357355">
        <id>Q9UBK9</id>
    </interactant>
    <interactant intactId="EBI-11987425">
        <id>Q6L8G8</id>
        <label>KRTAP5-7</label>
    </interactant>
    <organismsDiffer>false</organismsDiffer>
    <experiments>3</experiments>
</comment>
<comment type="interaction">
    <interactant intactId="EBI-357355">
        <id>Q9UBK9</id>
    </interactant>
    <interactant intactId="EBI-3958099">
        <id>P26371</id>
        <label>KRTAP5-9</label>
    </interactant>
    <organismsDiffer>false</organismsDiffer>
    <experiments>3</experiments>
</comment>
<comment type="interaction">
    <interactant intactId="EBI-357355">
        <id>Q9UBK9</id>
    </interactant>
    <interactant intactId="EBI-1384862">
        <id>Q03112</id>
        <label>MECOM</label>
    </interactant>
    <organismsDiffer>false</organismsDiffer>
    <experiments>5</experiments>
</comment>
<comment type="interaction">
    <interactant intactId="EBI-357355">
        <id>Q9UBK9</id>
    </interactant>
    <interactant intactId="EBI-711788">
        <id>Q00013</id>
        <label>MPP1</label>
    </interactant>
    <organismsDiffer>false</organismsDiffer>
    <experiments>3</experiments>
</comment>
<comment type="interaction">
    <interactant intactId="EBI-357355">
        <id>Q9UBK9</id>
    </interactant>
    <interactant intactId="EBI-945833">
        <id>Q7Z3S9</id>
        <label>NOTCH2NLA</label>
    </interactant>
    <organismsDiffer>false</organismsDiffer>
    <experiments>4</experiments>
</comment>
<comment type="interaction">
    <interactant intactId="EBI-357355">
        <id>Q9UBK9</id>
    </interactant>
    <interactant intactId="EBI-22310682">
        <id>P0DPK4</id>
        <label>NOTCH2NLC</label>
    </interactant>
    <organismsDiffer>false</organismsDiffer>
    <experiments>3</experiments>
</comment>
<comment type="interaction">
    <interactant intactId="EBI-357355">
        <id>Q9UBK9</id>
    </interactant>
    <interactant intactId="EBI-741896">
        <id>Q9P286</id>
        <label>PAK5</label>
    </interactant>
    <organismsDiffer>false</organismsDiffer>
    <experiments>4</experiments>
</comment>
<comment type="interaction">
    <interactant intactId="EBI-357355">
        <id>Q9UBK9</id>
    </interactant>
    <interactant intactId="EBI-359873">
        <id>Q9UHV9</id>
        <label>PFDN2</label>
    </interactant>
    <organismsDiffer>false</organismsDiffer>
    <experiments>4</experiments>
</comment>
<comment type="interaction">
    <interactant intactId="EBI-357355">
        <id>Q9UBK9</id>
    </interactant>
    <interactant intactId="EBI-73886">
        <id>Q04206</id>
        <label>RELA</label>
    </interactant>
    <organismsDiffer>false</organismsDiffer>
    <experiments>5</experiments>
</comment>
<comment type="interaction">
    <interactant intactId="EBI-357355">
        <id>Q9UBK9</id>
    </interactant>
    <interactant intactId="EBI-356928">
        <id>Q9H6T3</id>
        <label>RPAP3</label>
    </interactant>
    <organismsDiffer>false</organismsDiffer>
    <experiments>4</experiments>
</comment>
<comment type="interaction">
    <interactant intactId="EBI-357355">
        <id>Q9UBK9</id>
    </interactant>
    <interactant intactId="EBI-8716526">
        <id>Q0D2N8</id>
        <label>SARM1</label>
    </interactant>
    <organismsDiffer>false</organismsDiffer>
    <experiments>2</experiments>
</comment>
<comment type="interaction">
    <interactant intactId="EBI-357355">
        <id>Q9UBK9</id>
    </interactant>
    <interactant intactId="EBI-747107">
        <id>Q8IUQ4</id>
        <label>SIAH1</label>
    </interactant>
    <organismsDiffer>false</organismsDiffer>
    <experiments>3</experiments>
</comment>
<comment type="interaction">
    <interactant intactId="EBI-52318801">
        <id>Q9UBK9-2</id>
    </interactant>
    <interactant intactId="EBI-358193">
        <id>P16989</id>
        <label>YBX3</label>
    </interactant>
    <organismsDiffer>false</organismsDiffer>
    <experiments>4</experiments>
</comment>
<comment type="subcellular location">
    <molecule>Isoform 1</molecule>
    <subcellularLocation>
        <location evidence="8">Cytoplasm</location>
    </subcellularLocation>
</comment>
<comment type="subcellular location">
    <molecule>Isoform 2</molecule>
    <subcellularLocation>
        <location evidence="12">Nucleus</location>
    </subcellularLocation>
</comment>
<comment type="subcellular location">
    <subcellularLocation>
        <location evidence="8 16">Cytoplasm</location>
    </subcellularLocation>
    <subcellularLocation>
        <location evidence="3 6 8 16">Nucleus</location>
    </subcellularLocation>
    <subcellularLocation>
        <location evidence="4">Cytoplasm</location>
        <location evidence="4">Cytoskeleton</location>
        <location evidence="4">Microtubule organizing center</location>
        <location evidence="4">Centrosome</location>
    </subcellularLocation>
    <subcellularLocation>
        <location evidence="4">Cytoplasm</location>
        <location evidence="4">Cytoskeleton</location>
        <location evidence="4">Spindle pole</location>
    </subcellularLocation>
    <text evidence="4 8">Predominantly localizes to the nucleus (PubMed:16221885). Localizes to spindle pole during mitosis (PubMed:16221885).</text>
</comment>
<comment type="alternative products">
    <event type="alternative splicing"/>
    <isoform>
        <id>Q9UBK9-1</id>
        <name>2</name>
        <name evidence="14">UXT-V2</name>
        <sequence type="displayed"/>
    </isoform>
    <isoform>
        <id>Q9UBK9-2</id>
        <name>1</name>
        <name evidence="14">UXT-V1</name>
        <sequence type="described" ref="VSP_059081"/>
    </isoform>
</comment>
<comment type="tissue specificity">
    <text evidence="1 2 3 4 7 9 10">Ubiquitous (PubMed:10087202, PubMed:11827465, PubMed:11854421, PubMed:17635584). Expressed in prostate epithelial cells (PubMed:21730289). Expressed in mammary epithelial cells (PubMed:28106301). Highest levels in the heart, skeletal muscle, pancreas, kidney, liver, adrenal gland, peripheral blood leukocytes, lymph node, prostate, and thyroid and the lowest levels in bladder and uterus (PubMed:11827465, PubMed:11854421, PubMed:17635584). Overexpressed in a number of tumor tissues (PubMed:11854421, PubMed:16221885, PubMed:28106301).</text>
</comment>
<comment type="PTM">
    <molecule>Isoform 2</molecule>
    <text evidence="12">Ubiquitinated by E3 ubiquitin-protein ligase complex containing FBXO7; leading to proteasomal degradation.</text>
</comment>
<comment type="similarity">
    <text evidence="15">Belongs to the UXT family.</text>
</comment>
<protein>
    <recommendedName>
        <fullName>Protein UXT</fullName>
    </recommendedName>
    <alternativeName>
        <fullName evidence="13">Androgen receptor trapped clone 27 protein</fullName>
        <shortName evidence="13">ART-27</shortName>
    </alternativeName>
    <alternativeName>
        <fullName>Ubiquitously expressed transcript protein</fullName>
    </alternativeName>
</protein>
<sequence length="157" mass="18246">MATPPKRRAVEATGEKVLRYETFISDVLQRDLRKVLDHRDKVYEQLAKYLQLRNVIERLQEAKHSELYMQVDLGCNFFVDTVVPDTSRIYVALGYGFFLELTLAEALKFIDRKSSLLTELSNSLTKDSMNIKAHIHMLLEGLRELQGLQNFPEKPHH</sequence>
<keyword id="KW-0010">Activator</keyword>
<keyword id="KW-0025">Alternative splicing</keyword>
<keyword id="KW-0053">Apoptosis</keyword>
<keyword id="KW-0143">Chaperone</keyword>
<keyword id="KW-0963">Cytoplasm</keyword>
<keyword id="KW-0206">Cytoskeleton</keyword>
<keyword id="KW-0539">Nucleus</keyword>
<keyword id="KW-1267">Proteomics identification</keyword>
<keyword id="KW-1185">Reference proteome</keyword>
<keyword id="KW-0678">Repressor</keyword>
<keyword id="KW-0804">Transcription</keyword>
<keyword id="KW-0805">Transcription regulation</keyword>
<keyword id="KW-0832">Ubl conjugation</keyword>
<organism>
    <name type="scientific">Homo sapiens</name>
    <name type="common">Human</name>
    <dbReference type="NCBI Taxonomy" id="9606"/>
    <lineage>
        <taxon>Eukaryota</taxon>
        <taxon>Metazoa</taxon>
        <taxon>Chordata</taxon>
        <taxon>Craniata</taxon>
        <taxon>Vertebrata</taxon>
        <taxon>Euteleostomi</taxon>
        <taxon>Mammalia</taxon>
        <taxon>Eutheria</taxon>
        <taxon>Euarchontoglires</taxon>
        <taxon>Primates</taxon>
        <taxon>Haplorrhini</taxon>
        <taxon>Catarrhini</taxon>
        <taxon>Hominidae</taxon>
        <taxon>Homo</taxon>
    </lineage>
</organism>